<name>LR14B_MOUSE</name>
<keyword id="KW-0433">Leucine-rich repeat</keyword>
<keyword id="KW-1185">Reference proteome</keyword>
<keyword id="KW-0677">Repeat</keyword>
<feature type="chain" id="PRO_0000344241" description="Leucine-rich repeat-containing protein 14B">
    <location>
        <begin position="1"/>
        <end position="510"/>
    </location>
</feature>
<feature type="repeat" description="LRR 1; degenerate" evidence="2">
    <location>
        <begin position="100"/>
        <end position="137"/>
    </location>
</feature>
<feature type="repeat" description="LRR 2; degenerate" evidence="2">
    <location>
        <begin position="181"/>
        <end position="205"/>
    </location>
</feature>
<feature type="repeat" description="LRR 4; degenerate" evidence="2">
    <location>
        <begin position="234"/>
        <end position="273"/>
    </location>
</feature>
<feature type="repeat" description="LRR 5" evidence="2">
    <location>
        <begin position="274"/>
        <end position="298"/>
    </location>
</feature>
<feature type="repeat" description="LRR 6" evidence="2">
    <location>
        <begin position="299"/>
        <end position="330"/>
    </location>
</feature>
<feature type="repeat" description="LRR 7" evidence="2">
    <location>
        <begin position="331"/>
        <end position="349"/>
    </location>
</feature>
<feature type="repeat" description="LRR 8" evidence="2">
    <location>
        <begin position="355"/>
        <end position="382"/>
    </location>
</feature>
<feature type="repeat" description="LRR 9" evidence="2">
    <location>
        <begin position="383"/>
        <end position="407"/>
    </location>
</feature>
<accession>Q3UJB3</accession>
<accession>Q6P1Y3</accession>
<comment type="similarity">
    <text evidence="3">Belongs to the PRAME family. LRRC14 subfamily.</text>
</comment>
<comment type="sequence caution" evidence="3">
    <conflict type="erroneous initiation">
        <sequence resource="EMBL-CDS" id="AAH64819"/>
    </conflict>
    <text>Extended N-terminus.</text>
</comment>
<organism>
    <name type="scientific">Mus musculus</name>
    <name type="common">Mouse</name>
    <dbReference type="NCBI Taxonomy" id="10090"/>
    <lineage>
        <taxon>Eukaryota</taxon>
        <taxon>Metazoa</taxon>
        <taxon>Chordata</taxon>
        <taxon>Craniata</taxon>
        <taxon>Vertebrata</taxon>
        <taxon>Euteleostomi</taxon>
        <taxon>Mammalia</taxon>
        <taxon>Eutheria</taxon>
        <taxon>Euarchontoglires</taxon>
        <taxon>Glires</taxon>
        <taxon>Rodentia</taxon>
        <taxon>Myomorpha</taxon>
        <taxon>Muroidea</taxon>
        <taxon>Muridae</taxon>
        <taxon>Murinae</taxon>
        <taxon>Mus</taxon>
        <taxon>Mus</taxon>
    </lineage>
</organism>
<gene>
    <name evidence="4" type="primary">Lrrc14b</name>
</gene>
<sequence>MRSLRFISAEALVSHSQLVQENLDNIAYNLYPLLFKASYLLEQADVTRALLSHWPLEEFRLAVLLRPNTDHPEDLRDRACKACLEACMQGIADHVLKSGSNRLRVADFTGIQDVQVQQCPCGRALGRWGRTKVLARTCCQLQGQPCSAGHPIEVFADLFVTEGNFDMVVQALKPLGPAPLQVCCPSLRADSLSPGQLLQVLGLAGPGNLRKLEVVHNVRLHAGHVQQLLTQVGFPQLTSLTLPTKAFDAPPTCAPDPEGEDLLLTSIAWELSQMNQLTELSVAFSTLTGKIQTLLSPLKTPLRVLDLANCALNHEDISFLADCNHTAHLEVLDLSGHNLVHLYPSTFFRLLSQAAQTLRVLTLEECNITDSHVNMMILGLSPCSQLQQFKFLGNPLSGSALRRLFAALCELPRLRHIEFPVPKDCYPEGAIYPQDELSVSKFDQQKYDVIAEDLRAVLLRANREDIQVSTPLFGSFDPDIHETSNELGTFLLQAFKTALENFSRALEQME</sequence>
<evidence type="ECO:0000250" key="1">
    <source>
        <dbReference type="UniProtKB" id="A6NHZ5"/>
    </source>
</evidence>
<evidence type="ECO:0000250" key="2">
    <source>
        <dbReference type="UniProtKB" id="Q3UWY1"/>
    </source>
</evidence>
<evidence type="ECO:0000305" key="3"/>
<evidence type="ECO:0000312" key="4">
    <source>
        <dbReference type="MGI" id="MGI:2145269"/>
    </source>
</evidence>
<dbReference type="EMBL" id="AK146537">
    <property type="protein sequence ID" value="BAE27242.1"/>
    <property type="molecule type" value="mRNA"/>
</dbReference>
<dbReference type="EMBL" id="CH466563">
    <property type="protein sequence ID" value="EDL37094.1"/>
    <property type="molecule type" value="Genomic_DNA"/>
</dbReference>
<dbReference type="EMBL" id="BC064819">
    <property type="protein sequence ID" value="AAH64819.1"/>
    <property type="status" value="ALT_INIT"/>
    <property type="molecule type" value="mRNA"/>
</dbReference>
<dbReference type="EMBL" id="BC139119">
    <property type="protein sequence ID" value="AAI39120.1"/>
    <property type="molecule type" value="mRNA"/>
</dbReference>
<dbReference type="EMBL" id="BC139120">
    <property type="protein sequence ID" value="AAI39121.1"/>
    <property type="molecule type" value="mRNA"/>
</dbReference>
<dbReference type="CCDS" id="CCDS26645.1"/>
<dbReference type="RefSeq" id="NP_001028214.1">
    <property type="nucleotide sequence ID" value="NM_001033042.3"/>
</dbReference>
<dbReference type="SMR" id="Q3UJB3"/>
<dbReference type="FunCoup" id="Q3UJB3">
    <property type="interactions" value="523"/>
</dbReference>
<dbReference type="STRING" id="10090.ENSMUSP00000022064"/>
<dbReference type="iPTMnet" id="Q3UJB3"/>
<dbReference type="PhosphoSitePlus" id="Q3UJB3"/>
<dbReference type="PaxDb" id="10090-ENSMUSP00000022064"/>
<dbReference type="ProteomicsDB" id="252491"/>
<dbReference type="Antibodypedia" id="49983">
    <property type="antibodies" value="70 antibodies from 14 providers"/>
</dbReference>
<dbReference type="Ensembl" id="ENSMUST00000022064.5">
    <property type="protein sequence ID" value="ENSMUSP00000022064.5"/>
    <property type="gene ID" value="ENSMUSG00000021579.5"/>
</dbReference>
<dbReference type="GeneID" id="432779"/>
<dbReference type="KEGG" id="mmu:432779"/>
<dbReference type="UCSC" id="uc007rfe.1">
    <property type="organism name" value="mouse"/>
</dbReference>
<dbReference type="AGR" id="MGI:2145269"/>
<dbReference type="CTD" id="389257"/>
<dbReference type="MGI" id="MGI:2145269">
    <property type="gene designation" value="Lrrc14b"/>
</dbReference>
<dbReference type="VEuPathDB" id="HostDB:ENSMUSG00000021579"/>
<dbReference type="eggNOG" id="ENOG502QWSJ">
    <property type="taxonomic scope" value="Eukaryota"/>
</dbReference>
<dbReference type="GeneTree" id="ENSGT01030000234531"/>
<dbReference type="HOGENOM" id="CLU_039635_0_0_1"/>
<dbReference type="InParanoid" id="Q3UJB3"/>
<dbReference type="OMA" id="KACYLHE"/>
<dbReference type="OrthoDB" id="8875973at2759"/>
<dbReference type="PhylomeDB" id="Q3UJB3"/>
<dbReference type="TreeFam" id="TF332708"/>
<dbReference type="BioGRID-ORCS" id="432779">
    <property type="hits" value="2 hits in 43 CRISPR screens"/>
</dbReference>
<dbReference type="PRO" id="PR:Q3UJB3"/>
<dbReference type="Proteomes" id="UP000000589">
    <property type="component" value="Chromosome 13"/>
</dbReference>
<dbReference type="RNAct" id="Q3UJB3">
    <property type="molecule type" value="protein"/>
</dbReference>
<dbReference type="Bgee" id="ENSMUSG00000021579">
    <property type="expression patterns" value="Expressed in hindlimb stylopod muscle and 13 other cell types or tissues"/>
</dbReference>
<dbReference type="FunFam" id="3.80.10.10:FF:000313">
    <property type="entry name" value="Leucine rich repeat containing 14B"/>
    <property type="match status" value="1"/>
</dbReference>
<dbReference type="Gene3D" id="3.80.10.10">
    <property type="entry name" value="Ribonuclease Inhibitor"/>
    <property type="match status" value="1"/>
</dbReference>
<dbReference type="InterPro" id="IPR032675">
    <property type="entry name" value="LRR_dom_sf"/>
</dbReference>
<dbReference type="InterPro" id="IPR050694">
    <property type="entry name" value="PRAME_domain"/>
</dbReference>
<dbReference type="PANTHER" id="PTHR14224:SF27">
    <property type="entry name" value="LEUCINE-RICH REPEAT-CONTAINING PROTEIN 14B"/>
    <property type="match status" value="1"/>
</dbReference>
<dbReference type="PANTHER" id="PTHR14224">
    <property type="entry name" value="SIMILAR TO PREFERENTIALLY EXPRESSED ANTIGEN IN MELANOMA-LIKE 3"/>
    <property type="match status" value="1"/>
</dbReference>
<dbReference type="SUPFAM" id="SSF52047">
    <property type="entry name" value="RNI-like"/>
    <property type="match status" value="1"/>
</dbReference>
<protein>
    <recommendedName>
        <fullName evidence="1">Leucine-rich repeat-containing protein 14B</fullName>
    </recommendedName>
</protein>
<reference key="1">
    <citation type="journal article" date="2005" name="Science">
        <title>The transcriptional landscape of the mammalian genome.</title>
        <authorList>
            <person name="Carninci P."/>
            <person name="Kasukawa T."/>
            <person name="Katayama S."/>
            <person name="Gough J."/>
            <person name="Frith M.C."/>
            <person name="Maeda N."/>
            <person name="Oyama R."/>
            <person name="Ravasi T."/>
            <person name="Lenhard B."/>
            <person name="Wells C."/>
            <person name="Kodzius R."/>
            <person name="Shimokawa K."/>
            <person name="Bajic V.B."/>
            <person name="Brenner S.E."/>
            <person name="Batalov S."/>
            <person name="Forrest A.R."/>
            <person name="Zavolan M."/>
            <person name="Davis M.J."/>
            <person name="Wilming L.G."/>
            <person name="Aidinis V."/>
            <person name="Allen J.E."/>
            <person name="Ambesi-Impiombato A."/>
            <person name="Apweiler R."/>
            <person name="Aturaliya R.N."/>
            <person name="Bailey T.L."/>
            <person name="Bansal M."/>
            <person name="Baxter L."/>
            <person name="Beisel K.W."/>
            <person name="Bersano T."/>
            <person name="Bono H."/>
            <person name="Chalk A.M."/>
            <person name="Chiu K.P."/>
            <person name="Choudhary V."/>
            <person name="Christoffels A."/>
            <person name="Clutterbuck D.R."/>
            <person name="Crowe M.L."/>
            <person name="Dalla E."/>
            <person name="Dalrymple B.P."/>
            <person name="de Bono B."/>
            <person name="Della Gatta G."/>
            <person name="di Bernardo D."/>
            <person name="Down T."/>
            <person name="Engstrom P."/>
            <person name="Fagiolini M."/>
            <person name="Faulkner G."/>
            <person name="Fletcher C.F."/>
            <person name="Fukushima T."/>
            <person name="Furuno M."/>
            <person name="Futaki S."/>
            <person name="Gariboldi M."/>
            <person name="Georgii-Hemming P."/>
            <person name="Gingeras T.R."/>
            <person name="Gojobori T."/>
            <person name="Green R.E."/>
            <person name="Gustincich S."/>
            <person name="Harbers M."/>
            <person name="Hayashi Y."/>
            <person name="Hensch T.K."/>
            <person name="Hirokawa N."/>
            <person name="Hill D."/>
            <person name="Huminiecki L."/>
            <person name="Iacono M."/>
            <person name="Ikeo K."/>
            <person name="Iwama A."/>
            <person name="Ishikawa T."/>
            <person name="Jakt M."/>
            <person name="Kanapin A."/>
            <person name="Katoh M."/>
            <person name="Kawasawa Y."/>
            <person name="Kelso J."/>
            <person name="Kitamura H."/>
            <person name="Kitano H."/>
            <person name="Kollias G."/>
            <person name="Krishnan S.P."/>
            <person name="Kruger A."/>
            <person name="Kummerfeld S.K."/>
            <person name="Kurochkin I.V."/>
            <person name="Lareau L.F."/>
            <person name="Lazarevic D."/>
            <person name="Lipovich L."/>
            <person name="Liu J."/>
            <person name="Liuni S."/>
            <person name="McWilliam S."/>
            <person name="Madan Babu M."/>
            <person name="Madera M."/>
            <person name="Marchionni L."/>
            <person name="Matsuda H."/>
            <person name="Matsuzawa S."/>
            <person name="Miki H."/>
            <person name="Mignone F."/>
            <person name="Miyake S."/>
            <person name="Morris K."/>
            <person name="Mottagui-Tabar S."/>
            <person name="Mulder N."/>
            <person name="Nakano N."/>
            <person name="Nakauchi H."/>
            <person name="Ng P."/>
            <person name="Nilsson R."/>
            <person name="Nishiguchi S."/>
            <person name="Nishikawa S."/>
            <person name="Nori F."/>
            <person name="Ohara O."/>
            <person name="Okazaki Y."/>
            <person name="Orlando V."/>
            <person name="Pang K.C."/>
            <person name="Pavan W.J."/>
            <person name="Pavesi G."/>
            <person name="Pesole G."/>
            <person name="Petrovsky N."/>
            <person name="Piazza S."/>
            <person name="Reed J."/>
            <person name="Reid J.F."/>
            <person name="Ring B.Z."/>
            <person name="Ringwald M."/>
            <person name="Rost B."/>
            <person name="Ruan Y."/>
            <person name="Salzberg S.L."/>
            <person name="Sandelin A."/>
            <person name="Schneider C."/>
            <person name="Schoenbach C."/>
            <person name="Sekiguchi K."/>
            <person name="Semple C.A."/>
            <person name="Seno S."/>
            <person name="Sessa L."/>
            <person name="Sheng Y."/>
            <person name="Shibata Y."/>
            <person name="Shimada H."/>
            <person name="Shimada K."/>
            <person name="Silva D."/>
            <person name="Sinclair B."/>
            <person name="Sperling S."/>
            <person name="Stupka E."/>
            <person name="Sugiura K."/>
            <person name="Sultana R."/>
            <person name="Takenaka Y."/>
            <person name="Taki K."/>
            <person name="Tammoja K."/>
            <person name="Tan S.L."/>
            <person name="Tang S."/>
            <person name="Taylor M.S."/>
            <person name="Tegner J."/>
            <person name="Teichmann S.A."/>
            <person name="Ueda H.R."/>
            <person name="van Nimwegen E."/>
            <person name="Verardo R."/>
            <person name="Wei C.L."/>
            <person name="Yagi K."/>
            <person name="Yamanishi H."/>
            <person name="Zabarovsky E."/>
            <person name="Zhu S."/>
            <person name="Zimmer A."/>
            <person name="Hide W."/>
            <person name="Bult C."/>
            <person name="Grimmond S.M."/>
            <person name="Teasdale R.D."/>
            <person name="Liu E.T."/>
            <person name="Brusic V."/>
            <person name="Quackenbush J."/>
            <person name="Wahlestedt C."/>
            <person name="Mattick J.S."/>
            <person name="Hume D.A."/>
            <person name="Kai C."/>
            <person name="Sasaki D."/>
            <person name="Tomaru Y."/>
            <person name="Fukuda S."/>
            <person name="Kanamori-Katayama M."/>
            <person name="Suzuki M."/>
            <person name="Aoki J."/>
            <person name="Arakawa T."/>
            <person name="Iida J."/>
            <person name="Imamura K."/>
            <person name="Itoh M."/>
            <person name="Kato T."/>
            <person name="Kawaji H."/>
            <person name="Kawagashira N."/>
            <person name="Kawashima T."/>
            <person name="Kojima M."/>
            <person name="Kondo S."/>
            <person name="Konno H."/>
            <person name="Nakano K."/>
            <person name="Ninomiya N."/>
            <person name="Nishio T."/>
            <person name="Okada M."/>
            <person name="Plessy C."/>
            <person name="Shibata K."/>
            <person name="Shiraki T."/>
            <person name="Suzuki S."/>
            <person name="Tagami M."/>
            <person name="Waki K."/>
            <person name="Watahiki A."/>
            <person name="Okamura-Oho Y."/>
            <person name="Suzuki H."/>
            <person name="Kawai J."/>
            <person name="Hayashizaki Y."/>
        </authorList>
    </citation>
    <scope>NUCLEOTIDE SEQUENCE [LARGE SCALE MRNA]</scope>
    <source>
        <strain>C57BL/6J</strain>
        <tissue>Amnion</tissue>
    </source>
</reference>
<reference key="2">
    <citation type="submission" date="2005-07" db="EMBL/GenBank/DDBJ databases">
        <authorList>
            <person name="Mural R.J."/>
            <person name="Adams M.D."/>
            <person name="Myers E.W."/>
            <person name="Smith H.O."/>
            <person name="Venter J.C."/>
        </authorList>
    </citation>
    <scope>NUCLEOTIDE SEQUENCE [LARGE SCALE GENOMIC DNA]</scope>
</reference>
<reference key="3">
    <citation type="journal article" date="2004" name="Genome Res.">
        <title>The status, quality, and expansion of the NIH full-length cDNA project: the Mammalian Gene Collection (MGC).</title>
        <authorList>
            <consortium name="The MGC Project Team"/>
        </authorList>
    </citation>
    <scope>NUCLEOTIDE SEQUENCE [LARGE SCALE MRNA]</scope>
    <source>
        <tissue>Jaw</tissue>
        <tissue>Limb</tissue>
    </source>
</reference>
<proteinExistence type="evidence at transcript level"/>